<protein>
    <recommendedName>
        <fullName evidence="1">Ribulose bisphosphate carboxylase small subunit, chloroplastic</fullName>
        <shortName evidence="1">RuBisCO small subunit</shortName>
    </recommendedName>
</protein>
<reference key="1">
    <citation type="submission" date="1998-03" db="EMBL/GenBank/DDBJ databases">
        <authorList>
            <person name="McKersie B.D."/>
            <person name="Tyrrell J.W."/>
            <person name="Deng M."/>
        </authorList>
    </citation>
    <scope>NUCLEOTIDE SEQUENCE [MRNA]</scope>
    <source>
        <tissue>Leaf</tissue>
    </source>
</reference>
<comment type="function">
    <text evidence="1">RuBisCO catalyzes two reactions: the carboxylation of D-ribulose 1,5-bisphosphate, the primary event in carbon dioxide fixation, as well as the oxidative fragmentation of the pentose substrate. Both reactions occur simultaneously and in competition at the same active site. Although the small subunit is not catalytic it is essential for maximal activity.</text>
</comment>
<comment type="subunit">
    <text evidence="1">Heterohexadecamer of 8 large and 8 small subunits.</text>
</comment>
<comment type="subcellular location">
    <subcellularLocation>
        <location evidence="1">Plastid</location>
        <location evidence="1">Chloroplast</location>
    </subcellularLocation>
</comment>
<comment type="miscellaneous">
    <text evidence="1">The basic functional RuBisCO is composed of a large chain homodimer in a 'head-to-tail' conformation. In form I RuBisCO this homodimer is arranged in a barrel-like tetramer with the small subunits forming a tetrameric 'cap' on each end of the 'barrel'.</text>
</comment>
<comment type="similarity">
    <text evidence="1">Belongs to the RuBisCO small chain family.</text>
</comment>
<keyword id="KW-0113">Calvin cycle</keyword>
<keyword id="KW-0120">Carbon dioxide fixation</keyword>
<keyword id="KW-0150">Chloroplast</keyword>
<keyword id="KW-0601">Photorespiration</keyword>
<keyword id="KW-0602">Photosynthesis</keyword>
<keyword id="KW-0934">Plastid</keyword>
<keyword id="KW-0809">Transit peptide</keyword>
<feature type="transit peptide" description="Chloroplast" evidence="1">
    <location>
        <begin position="1"/>
        <end position="56"/>
    </location>
</feature>
<feature type="chain" id="PRO_0000031526" description="Ribulose bisphosphate carboxylase small subunit, chloroplastic" evidence="1">
    <location>
        <begin position="57"/>
        <end position="180"/>
    </location>
</feature>
<proteinExistence type="evidence at transcript level"/>
<sequence length="180" mass="20251">MALISSAAVTTVNRASSAQANLVAPFTGLKSSAGFPVTKKTNNDITSIASNGGRVNCMQVWPPVGKKKFETLSYLPPLTEEQLAKEVEYLIRKGWIPCLEFELEKGFVYRENHRSPGYYDGRYWTMWRLPLFGATDSSQVLKELADCKAEYPDSFIRIIGFDNVRQVQCISFIAHTPKNY</sequence>
<gene>
    <name evidence="1" type="primary">RBCS</name>
</gene>
<dbReference type="EMBL" id="AF056315">
    <property type="protein sequence ID" value="AAC13293.1"/>
    <property type="molecule type" value="mRNA"/>
</dbReference>
<dbReference type="PIR" id="T09336">
    <property type="entry name" value="T09336"/>
</dbReference>
<dbReference type="SMR" id="O65194"/>
<dbReference type="GO" id="GO:0009507">
    <property type="term" value="C:chloroplast"/>
    <property type="evidence" value="ECO:0007669"/>
    <property type="project" value="UniProtKB-SubCell"/>
</dbReference>
<dbReference type="GO" id="GO:0016984">
    <property type="term" value="F:ribulose-bisphosphate carboxylase activity"/>
    <property type="evidence" value="ECO:0007669"/>
    <property type="project" value="UniProtKB-UniRule"/>
</dbReference>
<dbReference type="GO" id="GO:0009853">
    <property type="term" value="P:photorespiration"/>
    <property type="evidence" value="ECO:0007669"/>
    <property type="project" value="UniProtKB-KW"/>
</dbReference>
<dbReference type="GO" id="GO:0019253">
    <property type="term" value="P:reductive pentose-phosphate cycle"/>
    <property type="evidence" value="ECO:0007669"/>
    <property type="project" value="UniProtKB-UniRule"/>
</dbReference>
<dbReference type="CDD" id="cd03527">
    <property type="entry name" value="RuBisCO_small"/>
    <property type="match status" value="1"/>
</dbReference>
<dbReference type="FunFam" id="3.30.190.10:FF:000001">
    <property type="entry name" value="Ribulose bisphosphate carboxylase small chain, chloroplastic"/>
    <property type="match status" value="1"/>
</dbReference>
<dbReference type="Gene3D" id="3.30.190.10">
    <property type="entry name" value="Ribulose bisphosphate carboxylase, small subunit"/>
    <property type="match status" value="1"/>
</dbReference>
<dbReference type="HAMAP" id="MF_00859">
    <property type="entry name" value="RuBisCO_S_bact"/>
    <property type="match status" value="1"/>
</dbReference>
<dbReference type="InterPro" id="IPR024681">
    <property type="entry name" value="RuBisCO_ssu"/>
</dbReference>
<dbReference type="InterPro" id="IPR000894">
    <property type="entry name" value="RuBisCO_ssu_dom"/>
</dbReference>
<dbReference type="InterPro" id="IPR024680">
    <property type="entry name" value="RuBisCO_ssu_N"/>
</dbReference>
<dbReference type="InterPro" id="IPR036385">
    <property type="entry name" value="RuBisCO_ssu_sf"/>
</dbReference>
<dbReference type="PANTHER" id="PTHR31262">
    <property type="entry name" value="RIBULOSE BISPHOSPHATE CARBOXYLASE SMALL CHAIN 1, CHLOROPLASTIC"/>
    <property type="match status" value="1"/>
</dbReference>
<dbReference type="PANTHER" id="PTHR31262:SF19">
    <property type="entry name" value="RIBULOSE BISPHOSPHATE CARBOXYLASE SMALL SUBUNIT, CHLOROPLASTIC 2"/>
    <property type="match status" value="1"/>
</dbReference>
<dbReference type="Pfam" id="PF12338">
    <property type="entry name" value="RbcS"/>
    <property type="match status" value="1"/>
</dbReference>
<dbReference type="Pfam" id="PF00101">
    <property type="entry name" value="RuBisCO_small"/>
    <property type="match status" value="1"/>
</dbReference>
<dbReference type="PRINTS" id="PR00152">
    <property type="entry name" value="RUBISCOSMALL"/>
</dbReference>
<dbReference type="SMART" id="SM00961">
    <property type="entry name" value="RuBisCO_small"/>
    <property type="match status" value="1"/>
</dbReference>
<dbReference type="SUPFAM" id="SSF55239">
    <property type="entry name" value="RuBisCO, small subunit"/>
    <property type="match status" value="1"/>
</dbReference>
<accession>O65194</accession>
<organism>
    <name type="scientific">Medicago sativa</name>
    <name type="common">Alfalfa</name>
    <dbReference type="NCBI Taxonomy" id="3879"/>
    <lineage>
        <taxon>Eukaryota</taxon>
        <taxon>Viridiplantae</taxon>
        <taxon>Streptophyta</taxon>
        <taxon>Embryophyta</taxon>
        <taxon>Tracheophyta</taxon>
        <taxon>Spermatophyta</taxon>
        <taxon>Magnoliopsida</taxon>
        <taxon>eudicotyledons</taxon>
        <taxon>Gunneridae</taxon>
        <taxon>Pentapetalae</taxon>
        <taxon>rosids</taxon>
        <taxon>fabids</taxon>
        <taxon>Fabales</taxon>
        <taxon>Fabaceae</taxon>
        <taxon>Papilionoideae</taxon>
        <taxon>50 kb inversion clade</taxon>
        <taxon>NPAAA clade</taxon>
        <taxon>Hologalegina</taxon>
        <taxon>IRL clade</taxon>
        <taxon>Trifolieae</taxon>
        <taxon>Medicago</taxon>
    </lineage>
</organism>
<evidence type="ECO:0000255" key="1">
    <source>
        <dbReference type="HAMAP-Rule" id="MF_00860"/>
    </source>
</evidence>
<name>RBS_MEDSA</name>